<name>YRO7_CAEEL</name>
<proteinExistence type="predicted"/>
<feature type="chain" id="PRO_0000065427" description="Uncharacterized protein R07G3.7">
    <location>
        <begin position="1"/>
        <end position="366"/>
    </location>
</feature>
<feature type="splice variant" id="VSP_010379" description="In isoform b." evidence="1">
    <location>
        <begin position="1"/>
        <end position="135"/>
    </location>
</feature>
<accession>Q09424</accession>
<accession>Q86NF1</accession>
<reference key="1">
    <citation type="journal article" date="1998" name="Science">
        <title>Genome sequence of the nematode C. elegans: a platform for investigating biology.</title>
        <authorList>
            <consortium name="The C. elegans sequencing consortium"/>
        </authorList>
    </citation>
    <scope>NUCLEOTIDE SEQUENCE [LARGE SCALE GENOMIC DNA]</scope>
    <scope>ALTERNATIVE SPLICING</scope>
    <source>
        <strain>Bristol N2</strain>
    </source>
</reference>
<evidence type="ECO:0000305" key="1"/>
<organism>
    <name type="scientific">Caenorhabditis elegans</name>
    <dbReference type="NCBI Taxonomy" id="6239"/>
    <lineage>
        <taxon>Eukaryota</taxon>
        <taxon>Metazoa</taxon>
        <taxon>Ecdysozoa</taxon>
        <taxon>Nematoda</taxon>
        <taxon>Chromadorea</taxon>
        <taxon>Rhabditida</taxon>
        <taxon>Rhabditina</taxon>
        <taxon>Rhabditomorpha</taxon>
        <taxon>Rhabditoidea</taxon>
        <taxon>Rhabditidae</taxon>
        <taxon>Peloderinae</taxon>
        <taxon>Caenorhabditis</taxon>
    </lineage>
</organism>
<protein>
    <recommendedName>
        <fullName>Uncharacterized protein R07G3.7</fullName>
    </recommendedName>
</protein>
<comment type="alternative products">
    <event type="alternative splicing"/>
    <isoform>
        <id>Q09424-1</id>
        <name>a</name>
        <sequence type="displayed"/>
    </isoform>
    <isoform>
        <id>Q09424-2</id>
        <name>b</name>
        <sequence type="described" ref="VSP_010379"/>
    </isoform>
</comment>
<dbReference type="EMBL" id="FO081291">
    <property type="protein sequence ID" value="CCD70518.1"/>
    <property type="molecule type" value="Genomic_DNA"/>
</dbReference>
<dbReference type="EMBL" id="FO081291">
    <property type="protein sequence ID" value="CCD70519.1"/>
    <property type="molecule type" value="Genomic_DNA"/>
</dbReference>
<dbReference type="PIR" id="T16706">
    <property type="entry name" value="T16706"/>
</dbReference>
<dbReference type="RefSeq" id="NP_495597.2">
    <molecule id="Q09424-1"/>
    <property type="nucleotide sequence ID" value="NM_063196.7"/>
</dbReference>
<dbReference type="RefSeq" id="NP_871975.2">
    <molecule id="Q09424-2"/>
    <property type="nucleotide sequence ID" value="NM_182175.8"/>
</dbReference>
<dbReference type="BioGRID" id="52369">
    <property type="interactions" value="3"/>
</dbReference>
<dbReference type="FunCoup" id="Q09424">
    <property type="interactions" value="162"/>
</dbReference>
<dbReference type="IntAct" id="Q09424">
    <property type="interactions" value="2"/>
</dbReference>
<dbReference type="PaxDb" id="6239-R07G3.7a"/>
<dbReference type="PeptideAtlas" id="Q09424"/>
<dbReference type="EnsemblMetazoa" id="R07G3.7a.1">
    <molecule id="Q09424-1"/>
    <property type="protein sequence ID" value="R07G3.7a.1"/>
    <property type="gene ID" value="WBGene00019943"/>
</dbReference>
<dbReference type="EnsemblMetazoa" id="R07G3.7b.1">
    <molecule id="Q09424-2"/>
    <property type="protein sequence ID" value="R07G3.7b.1"/>
    <property type="gene ID" value="WBGene00019943"/>
</dbReference>
<dbReference type="EnsemblMetazoa" id="R07G3.7b.2">
    <molecule id="Q09424-2"/>
    <property type="protein sequence ID" value="R07G3.7b.2"/>
    <property type="gene ID" value="WBGene00019943"/>
</dbReference>
<dbReference type="GeneID" id="187685"/>
<dbReference type="KEGG" id="cel:CELE_R07G3.7"/>
<dbReference type="UCSC" id="R07G3.7b.1">
    <molecule id="Q09424-1"/>
    <property type="organism name" value="c. elegans"/>
</dbReference>
<dbReference type="AGR" id="WB:WBGene00019943"/>
<dbReference type="CTD" id="187685"/>
<dbReference type="WormBase" id="R07G3.7a">
    <molecule id="Q09424-1"/>
    <property type="protein sequence ID" value="CE36004"/>
    <property type="gene ID" value="WBGene00019943"/>
</dbReference>
<dbReference type="WormBase" id="R07G3.7b">
    <molecule id="Q09424-2"/>
    <property type="protein sequence ID" value="CE36005"/>
    <property type="gene ID" value="WBGene00019943"/>
</dbReference>
<dbReference type="eggNOG" id="ENOG502TGUA">
    <property type="taxonomic scope" value="Eukaryota"/>
</dbReference>
<dbReference type="HOGENOM" id="CLU_060808_0_0_1"/>
<dbReference type="InParanoid" id="Q09424"/>
<dbReference type="OMA" id="KQWRFNA"/>
<dbReference type="OrthoDB" id="5786942at2759"/>
<dbReference type="PRO" id="PR:Q09424"/>
<dbReference type="Proteomes" id="UP000001940">
    <property type="component" value="Chromosome II"/>
</dbReference>
<dbReference type="Bgee" id="WBGene00019943">
    <property type="expression patterns" value="Expressed in adult organism and 4 other cell types or tissues"/>
</dbReference>
<sequence>MASSKKQKKKMHRPHNRKLMIRDLPVGAAYLLHPSLRGILLSRPKRWNSGSPSHRIAVNLVRKYKKQLKPRVLPFFCDHCRLASRTLLHIKEHVCDKEEKRKAARKEESRKFADYDVTNEIKLATNSEKQWRFNAMAVLEQTLRPNKVAPKKVEIEEDPGIDQLLDSEPDQEFYDAQEQEFEDDTPHYPIKDVLVPSSQPPRPKVTLKSSECLGHNDAGVFCFNCKGSFDSYNQFQLHLNEDYNDGKCNRALPEYYYVQRHDRTHMFDKRYKHSVQHHKPIKRDISHIQCTLCKAVNFASTGDLYAHMVKCASSTTNEDKESAIDCPTAFGYGMPPSFNACQYVFPDPAKERYSRNSRGSKEPVES</sequence>
<gene>
    <name type="ORF">R07G3.7</name>
</gene>
<keyword id="KW-0025">Alternative splicing</keyword>
<keyword id="KW-1185">Reference proteome</keyword>